<gene>
    <name type="ordered locus">CTC_01690.1</name>
</gene>
<proteinExistence type="inferred from homology"/>
<feature type="chain" id="PRO_0000094968" description="UPF0291 protein CTC_01690.1">
    <location>
        <begin position="1"/>
        <end position="60"/>
    </location>
</feature>
<name>Y1690_CLOTE</name>
<accession>P60083</accession>
<comment type="subcellular location">
    <subcellularLocation>
        <location evidence="1">Cytoplasm</location>
    </subcellularLocation>
</comment>
<comment type="similarity">
    <text evidence="1">Belongs to the UPF0291 family.</text>
</comment>
<organism>
    <name type="scientific">Clostridium tetani (strain Massachusetts / E88)</name>
    <dbReference type="NCBI Taxonomy" id="212717"/>
    <lineage>
        <taxon>Bacteria</taxon>
        <taxon>Bacillati</taxon>
        <taxon>Bacillota</taxon>
        <taxon>Clostridia</taxon>
        <taxon>Eubacteriales</taxon>
        <taxon>Clostridiaceae</taxon>
        <taxon>Clostridium</taxon>
    </lineage>
</organism>
<evidence type="ECO:0000305" key="1"/>
<keyword id="KW-0963">Cytoplasm</keyword>
<keyword id="KW-1185">Reference proteome</keyword>
<dbReference type="EMBL" id="AE015927">
    <property type="status" value="NOT_ANNOTATED_CDS"/>
    <property type="molecule type" value="Genomic_DNA"/>
</dbReference>
<dbReference type="SMR" id="P60083"/>
<dbReference type="Proteomes" id="UP000001412">
    <property type="component" value="Chromosome"/>
</dbReference>
<dbReference type="GO" id="GO:0005737">
    <property type="term" value="C:cytoplasm"/>
    <property type="evidence" value="ECO:0007669"/>
    <property type="project" value="UniProtKB-SubCell"/>
</dbReference>
<dbReference type="Gene3D" id="1.10.287.540">
    <property type="entry name" value="Helix hairpin bin"/>
    <property type="match status" value="1"/>
</dbReference>
<dbReference type="HAMAP" id="MF_01103">
    <property type="entry name" value="UPF0291"/>
    <property type="match status" value="1"/>
</dbReference>
<dbReference type="InterPro" id="IPR009242">
    <property type="entry name" value="DUF896"/>
</dbReference>
<dbReference type="PANTHER" id="PTHR37300">
    <property type="entry name" value="UPF0291 PROTEIN CBO2609/CLC_2481"/>
    <property type="match status" value="1"/>
</dbReference>
<dbReference type="PANTHER" id="PTHR37300:SF1">
    <property type="entry name" value="UPF0291 PROTEIN YNZC"/>
    <property type="match status" value="1"/>
</dbReference>
<dbReference type="Pfam" id="PF05979">
    <property type="entry name" value="DUF896"/>
    <property type="match status" value="1"/>
</dbReference>
<dbReference type="SUPFAM" id="SSF158221">
    <property type="entry name" value="YnzC-like"/>
    <property type="match status" value="1"/>
</dbReference>
<reference key="1">
    <citation type="journal article" date="2003" name="Proc. Natl. Acad. Sci. U.S.A.">
        <title>The genome sequence of Clostridium tetani, the causative agent of tetanus disease.</title>
        <authorList>
            <person name="Brueggemann H."/>
            <person name="Baeumer S."/>
            <person name="Fricke W.F."/>
            <person name="Wiezer A."/>
            <person name="Liesegang H."/>
            <person name="Decker I."/>
            <person name="Herzberg C."/>
            <person name="Martinez-Arias R."/>
            <person name="Merkl R."/>
            <person name="Henne A."/>
            <person name="Gottschalk G."/>
        </authorList>
    </citation>
    <scope>NUCLEOTIDE SEQUENCE [LARGE SCALE GENOMIC DNA]</scope>
    <source>
        <strain>Massachusetts / E88</strain>
    </source>
</reference>
<sequence length="60" mass="7133">MKVEELIERINYLYKKSKEEGLTEEEKIEQAELREKYLKNIRSNFRAQLESIGGVSKKQS</sequence>
<protein>
    <recommendedName>
        <fullName>UPF0291 protein CTC_01690.1</fullName>
    </recommendedName>
</protein>